<gene>
    <name evidence="1" type="primary">fluC2</name>
    <name evidence="1" type="synonym">crcB2</name>
    <name type="ordered locus">Pro_1794</name>
</gene>
<keyword id="KW-0997">Cell inner membrane</keyword>
<keyword id="KW-1003">Cell membrane</keyword>
<keyword id="KW-0407">Ion channel</keyword>
<keyword id="KW-0406">Ion transport</keyword>
<keyword id="KW-0472">Membrane</keyword>
<keyword id="KW-0479">Metal-binding</keyword>
<keyword id="KW-1185">Reference proteome</keyword>
<keyword id="KW-0915">Sodium</keyword>
<keyword id="KW-0812">Transmembrane</keyword>
<keyword id="KW-1133">Transmembrane helix</keyword>
<keyword id="KW-0813">Transport</keyword>
<dbReference type="EMBL" id="AE017126">
    <property type="protein sequence ID" value="AAQ00838.1"/>
    <property type="molecule type" value="Genomic_DNA"/>
</dbReference>
<dbReference type="RefSeq" id="NP_876185.1">
    <property type="nucleotide sequence ID" value="NC_005042.1"/>
</dbReference>
<dbReference type="SMR" id="Q7V9N5"/>
<dbReference type="STRING" id="167539.Pro_1794"/>
<dbReference type="EnsemblBacteria" id="AAQ00838">
    <property type="protein sequence ID" value="AAQ00838"/>
    <property type="gene ID" value="Pro_1794"/>
</dbReference>
<dbReference type="KEGG" id="pma:Pro_1794"/>
<dbReference type="PATRIC" id="fig|167539.5.peg.1895"/>
<dbReference type="eggNOG" id="COG0239">
    <property type="taxonomic scope" value="Bacteria"/>
</dbReference>
<dbReference type="HOGENOM" id="CLU_114342_2_3_3"/>
<dbReference type="OrthoDB" id="560684at2"/>
<dbReference type="Proteomes" id="UP000001420">
    <property type="component" value="Chromosome"/>
</dbReference>
<dbReference type="GO" id="GO:0005886">
    <property type="term" value="C:plasma membrane"/>
    <property type="evidence" value="ECO:0007669"/>
    <property type="project" value="UniProtKB-SubCell"/>
</dbReference>
<dbReference type="GO" id="GO:0062054">
    <property type="term" value="F:fluoride channel activity"/>
    <property type="evidence" value="ECO:0007669"/>
    <property type="project" value="UniProtKB-UniRule"/>
</dbReference>
<dbReference type="GO" id="GO:0046872">
    <property type="term" value="F:metal ion binding"/>
    <property type="evidence" value="ECO:0007669"/>
    <property type="project" value="UniProtKB-KW"/>
</dbReference>
<dbReference type="GO" id="GO:0140114">
    <property type="term" value="P:cellular detoxification of fluoride"/>
    <property type="evidence" value="ECO:0007669"/>
    <property type="project" value="UniProtKB-UniRule"/>
</dbReference>
<dbReference type="HAMAP" id="MF_00454">
    <property type="entry name" value="FluC"/>
    <property type="match status" value="1"/>
</dbReference>
<dbReference type="InterPro" id="IPR003691">
    <property type="entry name" value="FluC"/>
</dbReference>
<dbReference type="PANTHER" id="PTHR28259">
    <property type="entry name" value="FLUORIDE EXPORT PROTEIN 1-RELATED"/>
    <property type="match status" value="1"/>
</dbReference>
<dbReference type="PANTHER" id="PTHR28259:SF1">
    <property type="entry name" value="FLUORIDE EXPORT PROTEIN 1-RELATED"/>
    <property type="match status" value="1"/>
</dbReference>
<dbReference type="Pfam" id="PF02537">
    <property type="entry name" value="CRCB"/>
    <property type="match status" value="1"/>
</dbReference>
<evidence type="ECO:0000255" key="1">
    <source>
        <dbReference type="HAMAP-Rule" id="MF_00454"/>
    </source>
</evidence>
<organism>
    <name type="scientific">Prochlorococcus marinus (strain SARG / CCMP1375 / SS120)</name>
    <dbReference type="NCBI Taxonomy" id="167539"/>
    <lineage>
        <taxon>Bacteria</taxon>
        <taxon>Bacillati</taxon>
        <taxon>Cyanobacteriota</taxon>
        <taxon>Cyanophyceae</taxon>
        <taxon>Synechococcales</taxon>
        <taxon>Prochlorococcaceae</taxon>
        <taxon>Prochlorococcus</taxon>
    </lineage>
</organism>
<sequence>MFDGLSTYKSFFLVAFGAVPGAICRMKISDNLFRNKHNLWGILLVNSSACLLLGFFLAKQNYIHYINNDQPLYLLLCVGFLGSFSTFSSLILEIYYLFVDQQWMELFLFTFTSIGLGIIFISLGSHLFNA</sequence>
<name>FLUC2_PROMA</name>
<comment type="function">
    <text evidence="1">Fluoride-specific ion channel. Important for reducing fluoride concentration in the cell, thus reducing its toxicity.</text>
</comment>
<comment type="catalytic activity">
    <reaction evidence="1">
        <text>fluoride(in) = fluoride(out)</text>
        <dbReference type="Rhea" id="RHEA:76159"/>
        <dbReference type="ChEBI" id="CHEBI:17051"/>
    </reaction>
    <physiologicalReaction direction="left-to-right" evidence="1">
        <dbReference type="Rhea" id="RHEA:76160"/>
    </physiologicalReaction>
</comment>
<comment type="activity regulation">
    <text evidence="1">Na(+) is not transported, but it plays an essential structural role and its presence is essential for fluoride channel function.</text>
</comment>
<comment type="subcellular location">
    <subcellularLocation>
        <location evidence="1">Cell inner membrane</location>
        <topology evidence="1">Multi-pass membrane protein</topology>
    </subcellularLocation>
</comment>
<comment type="similarity">
    <text evidence="1">Belongs to the fluoride channel Fluc/FEX (TC 1.A.43) family.</text>
</comment>
<accession>Q7V9N5</accession>
<feature type="chain" id="PRO_0000110152" description="Fluoride-specific ion channel FluC 2">
    <location>
        <begin position="1"/>
        <end position="130"/>
    </location>
</feature>
<feature type="transmembrane region" description="Helical" evidence="1">
    <location>
        <begin position="4"/>
        <end position="24"/>
    </location>
</feature>
<feature type="transmembrane region" description="Helical" evidence="1">
    <location>
        <begin position="38"/>
        <end position="58"/>
    </location>
</feature>
<feature type="transmembrane region" description="Helical" evidence="1">
    <location>
        <begin position="72"/>
        <end position="92"/>
    </location>
</feature>
<feature type="transmembrane region" description="Helical" evidence="1">
    <location>
        <begin position="103"/>
        <end position="123"/>
    </location>
</feature>
<feature type="binding site" evidence="1">
    <location>
        <position position="82"/>
    </location>
    <ligand>
        <name>Na(+)</name>
        <dbReference type="ChEBI" id="CHEBI:29101"/>
        <note>structural</note>
    </ligand>
</feature>
<feature type="binding site" evidence="1">
    <location>
        <position position="85"/>
    </location>
    <ligand>
        <name>Na(+)</name>
        <dbReference type="ChEBI" id="CHEBI:29101"/>
        <note>structural</note>
    </ligand>
</feature>
<proteinExistence type="inferred from homology"/>
<reference key="1">
    <citation type="journal article" date="2003" name="Proc. Natl. Acad. Sci. U.S.A.">
        <title>Genome sequence of the cyanobacterium Prochlorococcus marinus SS120, a nearly minimal oxyphototrophic genome.</title>
        <authorList>
            <person name="Dufresne A."/>
            <person name="Salanoubat M."/>
            <person name="Partensky F."/>
            <person name="Artiguenave F."/>
            <person name="Axmann I.M."/>
            <person name="Barbe V."/>
            <person name="Duprat S."/>
            <person name="Galperin M.Y."/>
            <person name="Koonin E.V."/>
            <person name="Le Gall F."/>
            <person name="Makarova K.S."/>
            <person name="Ostrowski M."/>
            <person name="Oztas S."/>
            <person name="Robert C."/>
            <person name="Rogozin I.B."/>
            <person name="Scanlan D.J."/>
            <person name="Tandeau de Marsac N."/>
            <person name="Weissenbach J."/>
            <person name="Wincker P."/>
            <person name="Wolf Y.I."/>
            <person name="Hess W.R."/>
        </authorList>
    </citation>
    <scope>NUCLEOTIDE SEQUENCE [LARGE SCALE GENOMIC DNA]</scope>
    <source>
        <strain>SARG / CCMP1375 / SS120</strain>
    </source>
</reference>
<protein>
    <recommendedName>
        <fullName evidence="1">Fluoride-specific ion channel FluC 2</fullName>
    </recommendedName>
</protein>